<organism>
    <name type="scientific">Sodalis glossinidius (strain morsitans)</name>
    <dbReference type="NCBI Taxonomy" id="343509"/>
    <lineage>
        <taxon>Bacteria</taxon>
        <taxon>Pseudomonadati</taxon>
        <taxon>Pseudomonadota</taxon>
        <taxon>Gammaproteobacteria</taxon>
        <taxon>Enterobacterales</taxon>
        <taxon>Bruguierivoracaceae</taxon>
        <taxon>Sodalis</taxon>
    </lineage>
</organism>
<proteinExistence type="inferred from homology"/>
<dbReference type="EC" id="2.1.1.45" evidence="1"/>
<dbReference type="EMBL" id="AP008232">
    <property type="protein sequence ID" value="BAE75252.1"/>
    <property type="molecule type" value="Genomic_DNA"/>
</dbReference>
<dbReference type="RefSeq" id="WP_011411707.1">
    <property type="nucleotide sequence ID" value="NC_007712.1"/>
</dbReference>
<dbReference type="SMR" id="Q2NRH3"/>
<dbReference type="STRING" id="343509.SG1977"/>
<dbReference type="KEGG" id="sgl:SG1977"/>
<dbReference type="eggNOG" id="COG0207">
    <property type="taxonomic scope" value="Bacteria"/>
</dbReference>
<dbReference type="HOGENOM" id="CLU_021669_0_0_6"/>
<dbReference type="OrthoDB" id="9774633at2"/>
<dbReference type="BioCyc" id="SGLO343509:SGP1_RS18155-MONOMER"/>
<dbReference type="UniPathway" id="UPA00575"/>
<dbReference type="Proteomes" id="UP000001932">
    <property type="component" value="Chromosome"/>
</dbReference>
<dbReference type="GO" id="GO:0005829">
    <property type="term" value="C:cytosol"/>
    <property type="evidence" value="ECO:0007669"/>
    <property type="project" value="TreeGrafter"/>
</dbReference>
<dbReference type="GO" id="GO:0004799">
    <property type="term" value="F:thymidylate synthase activity"/>
    <property type="evidence" value="ECO:0007669"/>
    <property type="project" value="UniProtKB-UniRule"/>
</dbReference>
<dbReference type="GO" id="GO:0006231">
    <property type="term" value="P:dTMP biosynthetic process"/>
    <property type="evidence" value="ECO:0007669"/>
    <property type="project" value="UniProtKB-UniRule"/>
</dbReference>
<dbReference type="GO" id="GO:0006235">
    <property type="term" value="P:dTTP biosynthetic process"/>
    <property type="evidence" value="ECO:0007669"/>
    <property type="project" value="UniProtKB-UniRule"/>
</dbReference>
<dbReference type="GO" id="GO:0032259">
    <property type="term" value="P:methylation"/>
    <property type="evidence" value="ECO:0007669"/>
    <property type="project" value="UniProtKB-KW"/>
</dbReference>
<dbReference type="CDD" id="cd00351">
    <property type="entry name" value="TS_Pyrimidine_HMase"/>
    <property type="match status" value="1"/>
</dbReference>
<dbReference type="FunFam" id="3.30.572.10:FF:000001">
    <property type="entry name" value="Thymidylate synthase"/>
    <property type="match status" value="1"/>
</dbReference>
<dbReference type="Gene3D" id="3.30.572.10">
    <property type="entry name" value="Thymidylate synthase/dCMP hydroxymethylase domain"/>
    <property type="match status" value="1"/>
</dbReference>
<dbReference type="HAMAP" id="MF_00008">
    <property type="entry name" value="Thymidy_synth_bact"/>
    <property type="match status" value="1"/>
</dbReference>
<dbReference type="InterPro" id="IPR045097">
    <property type="entry name" value="Thymidate_synth/dCMP_Mease"/>
</dbReference>
<dbReference type="InterPro" id="IPR023451">
    <property type="entry name" value="Thymidate_synth/dCMP_Mease_dom"/>
</dbReference>
<dbReference type="InterPro" id="IPR036926">
    <property type="entry name" value="Thymidate_synth/dCMP_Mease_sf"/>
</dbReference>
<dbReference type="InterPro" id="IPR000398">
    <property type="entry name" value="Thymidylate_synthase"/>
</dbReference>
<dbReference type="InterPro" id="IPR020940">
    <property type="entry name" value="Thymidylate_synthase_AS"/>
</dbReference>
<dbReference type="NCBIfam" id="NF002497">
    <property type="entry name" value="PRK01827.1-3"/>
    <property type="match status" value="1"/>
</dbReference>
<dbReference type="NCBIfam" id="NF002499">
    <property type="entry name" value="PRK01827.1-5"/>
    <property type="match status" value="1"/>
</dbReference>
<dbReference type="NCBIfam" id="TIGR03284">
    <property type="entry name" value="thym_sym"/>
    <property type="match status" value="2"/>
</dbReference>
<dbReference type="PANTHER" id="PTHR11548:SF9">
    <property type="entry name" value="THYMIDYLATE SYNTHASE"/>
    <property type="match status" value="1"/>
</dbReference>
<dbReference type="PANTHER" id="PTHR11548">
    <property type="entry name" value="THYMIDYLATE SYNTHASE 1"/>
    <property type="match status" value="1"/>
</dbReference>
<dbReference type="Pfam" id="PF00303">
    <property type="entry name" value="Thymidylat_synt"/>
    <property type="match status" value="1"/>
</dbReference>
<dbReference type="PRINTS" id="PR00108">
    <property type="entry name" value="THYMDSNTHASE"/>
</dbReference>
<dbReference type="SUPFAM" id="SSF55831">
    <property type="entry name" value="Thymidylate synthase/dCMP hydroxymethylase"/>
    <property type="match status" value="1"/>
</dbReference>
<dbReference type="PROSITE" id="PS00091">
    <property type="entry name" value="THYMIDYLATE_SYNTHASE"/>
    <property type="match status" value="1"/>
</dbReference>
<sequence>MKQYLDLMRRVRAQGTPKADRTGTGTLSIFGHQMRFDLRQGFLLVTTKRCHLRSIIHELLWFLNGDTNIAYLQQNNVSIWDEWADDNGDLGPVYGRQWRAWGTSDGRQIDQLAEVVRQLKQDPDSRRIIVSAWNVGELDKMALAPCHALFQFYVANGTLSCQLYQRSCDIFLGLPFNIASYALLVHMLAQQCDLQVGDFVWTGGDTHLYSNHLQQADLQLTRDPLPLPQLLIKRRPATLFDYRFEDFELTGYDPHPAIKAPVAV</sequence>
<evidence type="ECO:0000255" key="1">
    <source>
        <dbReference type="HAMAP-Rule" id="MF_00008"/>
    </source>
</evidence>
<comment type="function">
    <text evidence="1">Catalyzes the reductive methylation of 2'-deoxyuridine-5'-monophosphate (dUMP) to 2'-deoxythymidine-5'-monophosphate (dTMP) while utilizing 5,10-methylenetetrahydrofolate (mTHF) as the methyl donor and reductant in the reaction, yielding dihydrofolate (DHF) as a by-product. This enzymatic reaction provides an intracellular de novo source of dTMP, an essential precursor for DNA biosynthesis.</text>
</comment>
<comment type="catalytic activity">
    <reaction evidence="1">
        <text>dUMP + (6R)-5,10-methylene-5,6,7,8-tetrahydrofolate = 7,8-dihydrofolate + dTMP</text>
        <dbReference type="Rhea" id="RHEA:12104"/>
        <dbReference type="ChEBI" id="CHEBI:15636"/>
        <dbReference type="ChEBI" id="CHEBI:57451"/>
        <dbReference type="ChEBI" id="CHEBI:63528"/>
        <dbReference type="ChEBI" id="CHEBI:246422"/>
        <dbReference type="EC" id="2.1.1.45"/>
    </reaction>
</comment>
<comment type="pathway">
    <text evidence="1">Pyrimidine metabolism; dTTP biosynthesis.</text>
</comment>
<comment type="subunit">
    <text evidence="1">Homodimer.</text>
</comment>
<comment type="subcellular location">
    <subcellularLocation>
        <location evidence="1">Cytoplasm</location>
    </subcellularLocation>
</comment>
<comment type="similarity">
    <text evidence="1">Belongs to the thymidylate synthase family. Bacterial-type ThyA subfamily.</text>
</comment>
<accession>Q2NRH3</accession>
<feature type="chain" id="PRO_1000000684" description="Thymidylate synthase">
    <location>
        <begin position="1"/>
        <end position="264"/>
    </location>
</feature>
<feature type="active site" description="Nucleophile" evidence="1">
    <location>
        <position position="146"/>
    </location>
</feature>
<feature type="binding site" description="in other chain" evidence="1">
    <location>
        <position position="21"/>
    </location>
    <ligand>
        <name>dUMP</name>
        <dbReference type="ChEBI" id="CHEBI:246422"/>
        <note>ligand shared between dimeric partners</note>
    </ligand>
</feature>
<feature type="binding site" evidence="1">
    <location>
        <position position="51"/>
    </location>
    <ligand>
        <name>(6R)-5,10-methylene-5,6,7,8-tetrahydrofolate</name>
        <dbReference type="ChEBI" id="CHEBI:15636"/>
    </ligand>
</feature>
<feature type="binding site" evidence="1">
    <location>
        <begin position="126"/>
        <end position="127"/>
    </location>
    <ligand>
        <name>dUMP</name>
        <dbReference type="ChEBI" id="CHEBI:246422"/>
        <note>ligand shared between dimeric partners</note>
    </ligand>
</feature>
<feature type="binding site" description="in other chain" evidence="1">
    <location>
        <begin position="166"/>
        <end position="169"/>
    </location>
    <ligand>
        <name>dUMP</name>
        <dbReference type="ChEBI" id="CHEBI:246422"/>
        <note>ligand shared between dimeric partners</note>
    </ligand>
</feature>
<feature type="binding site" evidence="1">
    <location>
        <position position="169"/>
    </location>
    <ligand>
        <name>(6R)-5,10-methylene-5,6,7,8-tetrahydrofolate</name>
        <dbReference type="ChEBI" id="CHEBI:15636"/>
    </ligand>
</feature>
<feature type="binding site" description="in other chain" evidence="1">
    <location>
        <position position="177"/>
    </location>
    <ligand>
        <name>dUMP</name>
        <dbReference type="ChEBI" id="CHEBI:246422"/>
        <note>ligand shared between dimeric partners</note>
    </ligand>
</feature>
<feature type="binding site" description="in other chain" evidence="1">
    <location>
        <begin position="207"/>
        <end position="209"/>
    </location>
    <ligand>
        <name>dUMP</name>
        <dbReference type="ChEBI" id="CHEBI:246422"/>
        <note>ligand shared between dimeric partners</note>
    </ligand>
</feature>
<feature type="binding site" evidence="1">
    <location>
        <position position="263"/>
    </location>
    <ligand>
        <name>(6R)-5,10-methylene-5,6,7,8-tetrahydrofolate</name>
        <dbReference type="ChEBI" id="CHEBI:15636"/>
    </ligand>
</feature>
<gene>
    <name evidence="1" type="primary">thyA</name>
    <name type="ordered locus">SG1977</name>
</gene>
<reference key="1">
    <citation type="journal article" date="2006" name="Genome Res.">
        <title>Massive genome erosion and functional adaptations provide insights into the symbiotic lifestyle of Sodalis glossinidius in the tsetse host.</title>
        <authorList>
            <person name="Toh H."/>
            <person name="Weiss B.L."/>
            <person name="Perkin S.A.H."/>
            <person name="Yamashita A."/>
            <person name="Oshima K."/>
            <person name="Hattori M."/>
            <person name="Aksoy S."/>
        </authorList>
    </citation>
    <scope>NUCLEOTIDE SEQUENCE [LARGE SCALE GENOMIC DNA]</scope>
    <source>
        <strain>morsitans</strain>
    </source>
</reference>
<name>TYSY_SODGM</name>
<protein>
    <recommendedName>
        <fullName evidence="1">Thymidylate synthase</fullName>
        <shortName evidence="1">TS</shortName>
        <shortName evidence="1">TSase</shortName>
        <ecNumber evidence="1">2.1.1.45</ecNumber>
    </recommendedName>
</protein>
<keyword id="KW-0963">Cytoplasm</keyword>
<keyword id="KW-0489">Methyltransferase</keyword>
<keyword id="KW-0545">Nucleotide biosynthesis</keyword>
<keyword id="KW-0808">Transferase</keyword>